<organism>
    <name type="scientific">Finegoldia magna (strain ATCC 29328 / DSM 20472 / WAL 2508)</name>
    <name type="common">Peptostreptococcus magnus</name>
    <dbReference type="NCBI Taxonomy" id="334413"/>
    <lineage>
        <taxon>Bacteria</taxon>
        <taxon>Bacillati</taxon>
        <taxon>Bacillota</taxon>
        <taxon>Tissierellia</taxon>
        <taxon>Tissierellales</taxon>
        <taxon>Peptoniphilaceae</taxon>
        <taxon>Finegoldia</taxon>
    </lineage>
</organism>
<name>FMT_FINM2</name>
<comment type="function">
    <text evidence="1">Attaches a formyl group to the free amino group of methionyl-tRNA(fMet). The formyl group appears to play a dual role in the initiator identity of N-formylmethionyl-tRNA by promoting its recognition by IF2 and preventing the misappropriation of this tRNA by the elongation apparatus.</text>
</comment>
<comment type="catalytic activity">
    <reaction evidence="1">
        <text>L-methionyl-tRNA(fMet) + (6R)-10-formyltetrahydrofolate = N-formyl-L-methionyl-tRNA(fMet) + (6S)-5,6,7,8-tetrahydrofolate + H(+)</text>
        <dbReference type="Rhea" id="RHEA:24380"/>
        <dbReference type="Rhea" id="RHEA-COMP:9952"/>
        <dbReference type="Rhea" id="RHEA-COMP:9953"/>
        <dbReference type="ChEBI" id="CHEBI:15378"/>
        <dbReference type="ChEBI" id="CHEBI:57453"/>
        <dbReference type="ChEBI" id="CHEBI:78530"/>
        <dbReference type="ChEBI" id="CHEBI:78844"/>
        <dbReference type="ChEBI" id="CHEBI:195366"/>
        <dbReference type="EC" id="2.1.2.9"/>
    </reaction>
</comment>
<comment type="similarity">
    <text evidence="1">Belongs to the Fmt family.</text>
</comment>
<sequence length="310" mass="35411">MKNKIVFTGSPDFAVESLQRLYDNPNNEIQLVISQEDKKRNRNKFSPTAVKKRAMELGIDVITPKNINDEEVFDLLDKLNPDFIVVVAYGQLIKKRILDRFKNKILNVHASILPKYRGASPINYSLLNGDKESGVSIMLVEQGLDTGDVLAVDKIKLDNEIMLEELHDKLMIMGADLINKVIDDYQKYFDSRKEQNENEASIVGKIHKSMGQINFNEKSDVIYNKFRGLTPWPGLFFKLEDKIIKVHNINIIKQYNDNKNGEVVKVDKNGIKVACEDGFIIITRLQLPNKKPLNISEYLNGNSFEEGIIL</sequence>
<evidence type="ECO:0000255" key="1">
    <source>
        <dbReference type="HAMAP-Rule" id="MF_00182"/>
    </source>
</evidence>
<gene>
    <name evidence="1" type="primary">fmt</name>
    <name type="ordered locus">FMG_0662</name>
</gene>
<dbReference type="EC" id="2.1.2.9" evidence="1"/>
<dbReference type="EMBL" id="AP008971">
    <property type="protein sequence ID" value="BAG08080.1"/>
    <property type="molecule type" value="Genomic_DNA"/>
</dbReference>
<dbReference type="RefSeq" id="WP_012290552.1">
    <property type="nucleotide sequence ID" value="NC_010376.1"/>
</dbReference>
<dbReference type="SMR" id="B0S140"/>
<dbReference type="STRING" id="334413.FMG_0662"/>
<dbReference type="KEGG" id="fma:FMG_0662"/>
<dbReference type="eggNOG" id="COG0223">
    <property type="taxonomic scope" value="Bacteria"/>
</dbReference>
<dbReference type="HOGENOM" id="CLU_033347_1_1_9"/>
<dbReference type="Proteomes" id="UP000001319">
    <property type="component" value="Chromosome"/>
</dbReference>
<dbReference type="GO" id="GO:0005829">
    <property type="term" value="C:cytosol"/>
    <property type="evidence" value="ECO:0007669"/>
    <property type="project" value="TreeGrafter"/>
</dbReference>
<dbReference type="GO" id="GO:0004479">
    <property type="term" value="F:methionyl-tRNA formyltransferase activity"/>
    <property type="evidence" value="ECO:0007669"/>
    <property type="project" value="UniProtKB-UniRule"/>
</dbReference>
<dbReference type="CDD" id="cd08646">
    <property type="entry name" value="FMT_core_Met-tRNA-FMT_N"/>
    <property type="match status" value="1"/>
</dbReference>
<dbReference type="CDD" id="cd08704">
    <property type="entry name" value="Met_tRNA_FMT_C"/>
    <property type="match status" value="1"/>
</dbReference>
<dbReference type="Gene3D" id="3.40.50.12230">
    <property type="match status" value="1"/>
</dbReference>
<dbReference type="HAMAP" id="MF_00182">
    <property type="entry name" value="Formyl_trans"/>
    <property type="match status" value="1"/>
</dbReference>
<dbReference type="InterPro" id="IPR005794">
    <property type="entry name" value="Fmt"/>
</dbReference>
<dbReference type="InterPro" id="IPR005793">
    <property type="entry name" value="Formyl_trans_C"/>
</dbReference>
<dbReference type="InterPro" id="IPR002376">
    <property type="entry name" value="Formyl_transf_N"/>
</dbReference>
<dbReference type="InterPro" id="IPR036477">
    <property type="entry name" value="Formyl_transf_N_sf"/>
</dbReference>
<dbReference type="InterPro" id="IPR011034">
    <property type="entry name" value="Formyl_transferase-like_C_sf"/>
</dbReference>
<dbReference type="InterPro" id="IPR044135">
    <property type="entry name" value="Met-tRNA-FMT_C"/>
</dbReference>
<dbReference type="InterPro" id="IPR041711">
    <property type="entry name" value="Met-tRNA-FMT_N"/>
</dbReference>
<dbReference type="NCBIfam" id="TIGR00460">
    <property type="entry name" value="fmt"/>
    <property type="match status" value="1"/>
</dbReference>
<dbReference type="PANTHER" id="PTHR11138">
    <property type="entry name" value="METHIONYL-TRNA FORMYLTRANSFERASE"/>
    <property type="match status" value="1"/>
</dbReference>
<dbReference type="PANTHER" id="PTHR11138:SF5">
    <property type="entry name" value="METHIONYL-TRNA FORMYLTRANSFERASE, MITOCHONDRIAL"/>
    <property type="match status" value="1"/>
</dbReference>
<dbReference type="Pfam" id="PF02911">
    <property type="entry name" value="Formyl_trans_C"/>
    <property type="match status" value="1"/>
</dbReference>
<dbReference type="Pfam" id="PF00551">
    <property type="entry name" value="Formyl_trans_N"/>
    <property type="match status" value="1"/>
</dbReference>
<dbReference type="SUPFAM" id="SSF50486">
    <property type="entry name" value="FMT C-terminal domain-like"/>
    <property type="match status" value="1"/>
</dbReference>
<dbReference type="SUPFAM" id="SSF53328">
    <property type="entry name" value="Formyltransferase"/>
    <property type="match status" value="1"/>
</dbReference>
<feature type="chain" id="PRO_1000190026" description="Methionyl-tRNA formyltransferase">
    <location>
        <begin position="1"/>
        <end position="310"/>
    </location>
</feature>
<feature type="binding site" evidence="1">
    <location>
        <begin position="111"/>
        <end position="114"/>
    </location>
    <ligand>
        <name>(6S)-5,6,7,8-tetrahydrofolate</name>
        <dbReference type="ChEBI" id="CHEBI:57453"/>
    </ligand>
</feature>
<proteinExistence type="inferred from homology"/>
<accession>B0S140</accession>
<protein>
    <recommendedName>
        <fullName evidence="1">Methionyl-tRNA formyltransferase</fullName>
        <ecNumber evidence="1">2.1.2.9</ecNumber>
    </recommendedName>
</protein>
<reference key="1">
    <citation type="journal article" date="2008" name="DNA Res.">
        <title>Complete genome sequence of Finegoldia magna, an anaerobic opportunistic pathogen.</title>
        <authorList>
            <person name="Goto T."/>
            <person name="Yamashita A."/>
            <person name="Hirakawa H."/>
            <person name="Matsutani M."/>
            <person name="Todo K."/>
            <person name="Ohshima K."/>
            <person name="Toh H."/>
            <person name="Miyamoto K."/>
            <person name="Kuhara S."/>
            <person name="Hattori M."/>
            <person name="Shimizu T."/>
            <person name="Akimoto S."/>
        </authorList>
    </citation>
    <scope>NUCLEOTIDE SEQUENCE [LARGE SCALE GENOMIC DNA]</scope>
    <source>
        <strain>ATCC 29328 / DSM 20472 / WAL 2508</strain>
    </source>
</reference>
<keyword id="KW-0648">Protein biosynthesis</keyword>
<keyword id="KW-1185">Reference proteome</keyword>
<keyword id="KW-0808">Transferase</keyword>